<dbReference type="EC" id="4.1.1.48" evidence="1"/>
<dbReference type="EMBL" id="CP000750">
    <property type="protein sequence ID" value="ABS04430.1"/>
    <property type="molecule type" value="Genomic_DNA"/>
</dbReference>
<dbReference type="RefSeq" id="WP_012087323.1">
    <property type="nucleotide sequence ID" value="NC_009664.2"/>
</dbReference>
<dbReference type="SMR" id="A6WC91"/>
<dbReference type="STRING" id="266940.Krad_2966"/>
<dbReference type="KEGG" id="kra:Krad_2966"/>
<dbReference type="eggNOG" id="COG0134">
    <property type="taxonomic scope" value="Bacteria"/>
</dbReference>
<dbReference type="HOGENOM" id="CLU_034247_0_0_11"/>
<dbReference type="OrthoDB" id="9804217at2"/>
<dbReference type="UniPathway" id="UPA00035">
    <property type="reaction ID" value="UER00043"/>
</dbReference>
<dbReference type="Proteomes" id="UP000001116">
    <property type="component" value="Chromosome"/>
</dbReference>
<dbReference type="GO" id="GO:0004425">
    <property type="term" value="F:indole-3-glycerol-phosphate synthase activity"/>
    <property type="evidence" value="ECO:0007669"/>
    <property type="project" value="UniProtKB-UniRule"/>
</dbReference>
<dbReference type="GO" id="GO:0004640">
    <property type="term" value="F:phosphoribosylanthranilate isomerase activity"/>
    <property type="evidence" value="ECO:0007669"/>
    <property type="project" value="TreeGrafter"/>
</dbReference>
<dbReference type="GO" id="GO:0000162">
    <property type="term" value="P:L-tryptophan biosynthetic process"/>
    <property type="evidence" value="ECO:0007669"/>
    <property type="project" value="UniProtKB-UniRule"/>
</dbReference>
<dbReference type="CDD" id="cd00331">
    <property type="entry name" value="IGPS"/>
    <property type="match status" value="1"/>
</dbReference>
<dbReference type="FunFam" id="3.20.20.70:FF:000024">
    <property type="entry name" value="Indole-3-glycerol phosphate synthase"/>
    <property type="match status" value="1"/>
</dbReference>
<dbReference type="Gene3D" id="3.20.20.70">
    <property type="entry name" value="Aldolase class I"/>
    <property type="match status" value="1"/>
</dbReference>
<dbReference type="HAMAP" id="MF_00134_A">
    <property type="entry name" value="IGPS_A"/>
    <property type="match status" value="1"/>
</dbReference>
<dbReference type="HAMAP" id="MF_00134_B">
    <property type="entry name" value="IGPS_B"/>
    <property type="match status" value="1"/>
</dbReference>
<dbReference type="InterPro" id="IPR013785">
    <property type="entry name" value="Aldolase_TIM"/>
</dbReference>
<dbReference type="InterPro" id="IPR045186">
    <property type="entry name" value="Indole-3-glycerol_P_synth"/>
</dbReference>
<dbReference type="InterPro" id="IPR013798">
    <property type="entry name" value="Indole-3-glycerol_P_synth_dom"/>
</dbReference>
<dbReference type="InterPro" id="IPR001468">
    <property type="entry name" value="Indole-3-GlycerolPSynthase_CS"/>
</dbReference>
<dbReference type="InterPro" id="IPR011060">
    <property type="entry name" value="RibuloseP-bd_barrel"/>
</dbReference>
<dbReference type="NCBIfam" id="NF001369">
    <property type="entry name" value="PRK00278.1-1"/>
    <property type="match status" value="1"/>
</dbReference>
<dbReference type="NCBIfam" id="NF001377">
    <property type="entry name" value="PRK00278.2-4"/>
    <property type="match status" value="1"/>
</dbReference>
<dbReference type="PANTHER" id="PTHR22854:SF2">
    <property type="entry name" value="INDOLE-3-GLYCEROL-PHOSPHATE SYNTHASE"/>
    <property type="match status" value="1"/>
</dbReference>
<dbReference type="PANTHER" id="PTHR22854">
    <property type="entry name" value="TRYPTOPHAN BIOSYNTHESIS PROTEIN"/>
    <property type="match status" value="1"/>
</dbReference>
<dbReference type="Pfam" id="PF00218">
    <property type="entry name" value="IGPS"/>
    <property type="match status" value="1"/>
</dbReference>
<dbReference type="SUPFAM" id="SSF51366">
    <property type="entry name" value="Ribulose-phoshate binding barrel"/>
    <property type="match status" value="1"/>
</dbReference>
<dbReference type="PROSITE" id="PS00614">
    <property type="entry name" value="IGPS"/>
    <property type="match status" value="1"/>
</dbReference>
<comment type="catalytic activity">
    <reaction evidence="1">
        <text>1-(2-carboxyphenylamino)-1-deoxy-D-ribulose 5-phosphate + H(+) = (1S,2R)-1-C-(indol-3-yl)glycerol 3-phosphate + CO2 + H2O</text>
        <dbReference type="Rhea" id="RHEA:23476"/>
        <dbReference type="ChEBI" id="CHEBI:15377"/>
        <dbReference type="ChEBI" id="CHEBI:15378"/>
        <dbReference type="ChEBI" id="CHEBI:16526"/>
        <dbReference type="ChEBI" id="CHEBI:58613"/>
        <dbReference type="ChEBI" id="CHEBI:58866"/>
        <dbReference type="EC" id="4.1.1.48"/>
    </reaction>
</comment>
<comment type="pathway">
    <text evidence="1">Amino-acid biosynthesis; L-tryptophan biosynthesis; L-tryptophan from chorismate: step 4/5.</text>
</comment>
<comment type="similarity">
    <text evidence="1">Belongs to the TrpC family.</text>
</comment>
<name>TRPC_KINRD</name>
<feature type="chain" id="PRO_1000076419" description="Indole-3-glycerol phosphate synthase">
    <location>
        <begin position="1"/>
        <end position="274"/>
    </location>
</feature>
<protein>
    <recommendedName>
        <fullName evidence="1">Indole-3-glycerol phosphate synthase</fullName>
        <shortName evidence="1">IGPS</shortName>
        <ecNumber evidence="1">4.1.1.48</ecNumber>
    </recommendedName>
</protein>
<accession>A6WC91</accession>
<organism>
    <name type="scientific">Kineococcus radiotolerans (strain ATCC BAA-149 / DSM 14245 / SRS30216)</name>
    <dbReference type="NCBI Taxonomy" id="266940"/>
    <lineage>
        <taxon>Bacteria</taxon>
        <taxon>Bacillati</taxon>
        <taxon>Actinomycetota</taxon>
        <taxon>Actinomycetes</taxon>
        <taxon>Kineosporiales</taxon>
        <taxon>Kineosporiaceae</taxon>
        <taxon>Kineococcus</taxon>
    </lineage>
</organism>
<reference key="1">
    <citation type="journal article" date="2008" name="PLoS ONE">
        <title>Survival in nuclear waste, extreme resistance, and potential applications gleaned from the genome sequence of Kineococcus radiotolerans SRS30216.</title>
        <authorList>
            <person name="Bagwell C.E."/>
            <person name="Bhat S."/>
            <person name="Hawkins G.M."/>
            <person name="Smith B.W."/>
            <person name="Biswas T."/>
            <person name="Hoover T.R."/>
            <person name="Saunders E."/>
            <person name="Han C.S."/>
            <person name="Tsodikov O.V."/>
            <person name="Shimkets L.J."/>
        </authorList>
    </citation>
    <scope>NUCLEOTIDE SEQUENCE [LARGE SCALE GENOMIC DNA]</scope>
    <source>
        <strain>ATCC BAA-149 / DSM 14245 / SRS30216</strain>
    </source>
</reference>
<gene>
    <name evidence="1" type="primary">trpC</name>
    <name type="ordered locus">Krad_2966</name>
</gene>
<evidence type="ECO:0000255" key="1">
    <source>
        <dbReference type="HAMAP-Rule" id="MF_00134"/>
    </source>
</evidence>
<sequence length="274" mass="29385">MTVLDDILAGVREDLAARKALTTLDELKERAHRQVPAKDAQGLLKPRDAEQRGVKVIAEVKRRSPSKGALATIPDPAALAEQYELGGATVISVLTEQRRFGGSLEDLRAVRCAVDVPVLRKDFVVDSYQLWEARAWGADVVLLIVAALEQEALVSLIERTRSLGMTALVEVHTAEEVARALDADARVVGVNNRNLKTLEVDNATFADLAPLIPDHVVRIAESGVSGPRDVVEFARAGADAVLVGETLVRGEDPRRAVADLVAAGAHPAVQAVRP</sequence>
<keyword id="KW-0028">Amino-acid biosynthesis</keyword>
<keyword id="KW-0057">Aromatic amino acid biosynthesis</keyword>
<keyword id="KW-0210">Decarboxylase</keyword>
<keyword id="KW-0456">Lyase</keyword>
<keyword id="KW-1185">Reference proteome</keyword>
<keyword id="KW-0822">Tryptophan biosynthesis</keyword>
<proteinExistence type="inferred from homology"/>